<organism>
    <name type="scientific">Salmonella gallinarum (strain 287/91 / NCTC 13346)</name>
    <dbReference type="NCBI Taxonomy" id="550538"/>
    <lineage>
        <taxon>Bacteria</taxon>
        <taxon>Pseudomonadati</taxon>
        <taxon>Pseudomonadota</taxon>
        <taxon>Gammaproteobacteria</taxon>
        <taxon>Enterobacterales</taxon>
        <taxon>Enterobacteriaceae</taxon>
        <taxon>Salmonella</taxon>
    </lineage>
</organism>
<keyword id="KW-0255">Endonuclease</keyword>
<keyword id="KW-0269">Exonuclease</keyword>
<keyword id="KW-0378">Hydrolase</keyword>
<keyword id="KW-0479">Metal-binding</keyword>
<keyword id="KW-0540">Nuclease</keyword>
<keyword id="KW-0819">tRNA processing</keyword>
<keyword id="KW-0862">Zinc</keyword>
<dbReference type="EC" id="3.1.-.-" evidence="1"/>
<dbReference type="EMBL" id="AM933173">
    <property type="protein sequence ID" value="CAR38172.1"/>
    <property type="molecule type" value="Genomic_DNA"/>
</dbReference>
<dbReference type="RefSeq" id="WP_000419097.1">
    <property type="nucleotide sequence ID" value="NC_011274.1"/>
</dbReference>
<dbReference type="SMR" id="B5RCD8"/>
<dbReference type="KEGG" id="seg:SG2342"/>
<dbReference type="HOGENOM" id="CLU_031317_2_0_6"/>
<dbReference type="Proteomes" id="UP000008321">
    <property type="component" value="Chromosome"/>
</dbReference>
<dbReference type="GO" id="GO:0042781">
    <property type="term" value="F:3'-tRNA processing endoribonuclease activity"/>
    <property type="evidence" value="ECO:0007669"/>
    <property type="project" value="TreeGrafter"/>
</dbReference>
<dbReference type="GO" id="GO:0004527">
    <property type="term" value="F:exonuclease activity"/>
    <property type="evidence" value="ECO:0007669"/>
    <property type="project" value="UniProtKB-UniRule"/>
</dbReference>
<dbReference type="GO" id="GO:0008270">
    <property type="term" value="F:zinc ion binding"/>
    <property type="evidence" value="ECO:0007669"/>
    <property type="project" value="UniProtKB-UniRule"/>
</dbReference>
<dbReference type="CDD" id="cd07717">
    <property type="entry name" value="RNaseZ_ZiPD-like_MBL-fold"/>
    <property type="match status" value="1"/>
</dbReference>
<dbReference type="FunFam" id="3.60.15.10:FF:000002">
    <property type="entry name" value="Ribonuclease Z"/>
    <property type="match status" value="1"/>
</dbReference>
<dbReference type="Gene3D" id="3.60.15.10">
    <property type="entry name" value="Ribonuclease Z/Hydroxyacylglutathione hydrolase-like"/>
    <property type="match status" value="1"/>
</dbReference>
<dbReference type="HAMAP" id="MF_01818">
    <property type="entry name" value="RNase_Z_BN"/>
    <property type="match status" value="1"/>
</dbReference>
<dbReference type="InterPro" id="IPR001279">
    <property type="entry name" value="Metallo-B-lactamas"/>
</dbReference>
<dbReference type="InterPro" id="IPR036866">
    <property type="entry name" value="RibonucZ/Hydroxyglut_hydro"/>
</dbReference>
<dbReference type="InterPro" id="IPR013469">
    <property type="entry name" value="Rnase_BN"/>
</dbReference>
<dbReference type="InterPro" id="IPR013471">
    <property type="entry name" value="RNase_Z/BN"/>
</dbReference>
<dbReference type="NCBIfam" id="NF000800">
    <property type="entry name" value="PRK00055.1-1"/>
    <property type="match status" value="1"/>
</dbReference>
<dbReference type="NCBIfam" id="NF000801">
    <property type="entry name" value="PRK00055.1-3"/>
    <property type="match status" value="1"/>
</dbReference>
<dbReference type="NCBIfam" id="TIGR02651">
    <property type="entry name" value="RNase_Z"/>
    <property type="match status" value="1"/>
</dbReference>
<dbReference type="NCBIfam" id="TIGR02649">
    <property type="entry name" value="true_RNase_BN"/>
    <property type="match status" value="1"/>
</dbReference>
<dbReference type="PANTHER" id="PTHR46018">
    <property type="entry name" value="ZINC PHOSPHODIESTERASE ELAC PROTEIN 1"/>
    <property type="match status" value="1"/>
</dbReference>
<dbReference type="PANTHER" id="PTHR46018:SF2">
    <property type="entry name" value="ZINC PHOSPHODIESTERASE ELAC PROTEIN 1"/>
    <property type="match status" value="1"/>
</dbReference>
<dbReference type="Pfam" id="PF12706">
    <property type="entry name" value="Lactamase_B_2"/>
    <property type="match status" value="2"/>
</dbReference>
<dbReference type="SUPFAM" id="SSF56281">
    <property type="entry name" value="Metallo-hydrolase/oxidoreductase"/>
    <property type="match status" value="1"/>
</dbReference>
<proteinExistence type="inferred from homology"/>
<name>RBN_SALG2</name>
<accession>B5RCD8</accession>
<comment type="function">
    <text evidence="1">Zinc phosphodiesterase, which has both exoribonuclease and endoribonuclease activities.</text>
</comment>
<comment type="cofactor">
    <cofactor evidence="1">
        <name>Zn(2+)</name>
        <dbReference type="ChEBI" id="CHEBI:29105"/>
    </cofactor>
    <text evidence="1">Binds 2 Zn(2+) ions.</text>
</comment>
<comment type="subunit">
    <text evidence="1">Homodimer.</text>
</comment>
<comment type="similarity">
    <text evidence="1">Belongs to the RNase Z family. RNase BN subfamily.</text>
</comment>
<protein>
    <recommendedName>
        <fullName evidence="1">Ribonuclease BN</fullName>
        <shortName evidence="1">RNase BN</shortName>
        <ecNumber evidence="1">3.1.-.-</ecNumber>
    </recommendedName>
    <alternativeName>
        <fullName evidence="1">Ribonuclease Z homolog</fullName>
        <shortName evidence="1">RNase Z homolog</shortName>
    </alternativeName>
</protein>
<reference key="1">
    <citation type="journal article" date="2008" name="Genome Res.">
        <title>Comparative genome analysis of Salmonella enteritidis PT4 and Salmonella gallinarum 287/91 provides insights into evolutionary and host adaptation pathways.</title>
        <authorList>
            <person name="Thomson N.R."/>
            <person name="Clayton D.J."/>
            <person name="Windhorst D."/>
            <person name="Vernikos G."/>
            <person name="Davidson S."/>
            <person name="Churcher C."/>
            <person name="Quail M.A."/>
            <person name="Stevens M."/>
            <person name="Jones M.A."/>
            <person name="Watson M."/>
            <person name="Barron A."/>
            <person name="Layton A."/>
            <person name="Pickard D."/>
            <person name="Kingsley R.A."/>
            <person name="Bignell A."/>
            <person name="Clark L."/>
            <person name="Harris B."/>
            <person name="Ormond D."/>
            <person name="Abdellah Z."/>
            <person name="Brooks K."/>
            <person name="Cherevach I."/>
            <person name="Chillingworth T."/>
            <person name="Woodward J."/>
            <person name="Norberczak H."/>
            <person name="Lord A."/>
            <person name="Arrowsmith C."/>
            <person name="Jagels K."/>
            <person name="Moule S."/>
            <person name="Mungall K."/>
            <person name="Saunders M."/>
            <person name="Whitehead S."/>
            <person name="Chabalgoity J.A."/>
            <person name="Maskell D."/>
            <person name="Humphreys T."/>
            <person name="Roberts M."/>
            <person name="Barrow P.A."/>
            <person name="Dougan G."/>
            <person name="Parkhill J."/>
        </authorList>
    </citation>
    <scope>NUCLEOTIDE SEQUENCE [LARGE SCALE GENOMIC DNA]</scope>
    <source>
        <strain>287/91 / NCTC 13346</strain>
    </source>
</reference>
<evidence type="ECO:0000255" key="1">
    <source>
        <dbReference type="HAMAP-Rule" id="MF_01818"/>
    </source>
</evidence>
<gene>
    <name evidence="1" type="primary">rbn</name>
    <name type="synonym">rnz</name>
    <name type="ordered locus">SG2342</name>
</gene>
<sequence length="305" mass="32879">MELIFLGTSAGVPTRSRNVTAILLHLQHPTQPGVWLFDCGEGTQHQMLNTAFHPGKLERIFISHLHGDHLFGLPGLLCSRSMAGNPHPLTVYGPQGVREFIATTLRLSGSWTDFPLQIEEVSAGDILDDGLRKVTAFRLEHPLECYGYRVVEHDKPGALNARALKAAGVTPGPLFQALKAGKTVTLADGRQINGADYLAPAVAGKSVAIFGDTAPCEAALALAQGVDVMVHETTLDASMEEKANSRGHSSTRQTATLAREAAVGRLIMTHISSRYDDKGCQRLLAECRAIFPATELAYDFSVFPV</sequence>
<feature type="chain" id="PRO_1000187983" description="Ribonuclease BN">
    <location>
        <begin position="1"/>
        <end position="305"/>
    </location>
</feature>
<feature type="active site" description="Proton acceptor" evidence="1">
    <location>
        <position position="68"/>
    </location>
</feature>
<feature type="binding site" evidence="1">
    <location>
        <position position="64"/>
    </location>
    <ligand>
        <name>Zn(2+)</name>
        <dbReference type="ChEBI" id="CHEBI:29105"/>
        <label>1</label>
        <note>catalytic</note>
    </ligand>
</feature>
<feature type="binding site" evidence="1">
    <location>
        <position position="66"/>
    </location>
    <ligand>
        <name>Zn(2+)</name>
        <dbReference type="ChEBI" id="CHEBI:29105"/>
        <label>1</label>
        <note>catalytic</note>
    </ligand>
</feature>
<feature type="binding site" evidence="1">
    <location>
        <position position="68"/>
    </location>
    <ligand>
        <name>Zn(2+)</name>
        <dbReference type="ChEBI" id="CHEBI:29105"/>
        <label>2</label>
        <note>catalytic</note>
    </ligand>
</feature>
<feature type="binding site" evidence="1">
    <location>
        <position position="69"/>
    </location>
    <ligand>
        <name>Zn(2+)</name>
        <dbReference type="ChEBI" id="CHEBI:29105"/>
        <label>2</label>
        <note>catalytic</note>
    </ligand>
</feature>
<feature type="binding site" evidence="1">
    <location>
        <position position="141"/>
    </location>
    <ligand>
        <name>Zn(2+)</name>
        <dbReference type="ChEBI" id="CHEBI:29105"/>
        <label>1</label>
        <note>catalytic</note>
    </ligand>
</feature>
<feature type="binding site" evidence="1">
    <location>
        <position position="212"/>
    </location>
    <ligand>
        <name>Zn(2+)</name>
        <dbReference type="ChEBI" id="CHEBI:29105"/>
        <label>1</label>
        <note>catalytic</note>
    </ligand>
</feature>
<feature type="binding site" evidence="1">
    <location>
        <position position="212"/>
    </location>
    <ligand>
        <name>Zn(2+)</name>
        <dbReference type="ChEBI" id="CHEBI:29105"/>
        <label>2</label>
        <note>catalytic</note>
    </ligand>
</feature>
<feature type="binding site" evidence="1">
    <location>
        <position position="270"/>
    </location>
    <ligand>
        <name>Zn(2+)</name>
        <dbReference type="ChEBI" id="CHEBI:29105"/>
        <label>2</label>
        <note>catalytic</note>
    </ligand>
</feature>